<keyword id="KW-0997">Cell inner membrane</keyword>
<keyword id="KW-1003">Cell membrane</keyword>
<keyword id="KW-0472">Membrane</keyword>
<keyword id="KW-0812">Transmembrane</keyword>
<keyword id="KW-1133">Transmembrane helix</keyword>
<feature type="chain" id="PRO_1000131543" description="UPF0761 membrane protein VSAL_I2938">
    <location>
        <begin position="1"/>
        <end position="310"/>
    </location>
</feature>
<feature type="transmembrane region" description="Helical" evidence="1">
    <location>
        <begin position="34"/>
        <end position="54"/>
    </location>
</feature>
<feature type="transmembrane region" description="Helical" evidence="1">
    <location>
        <begin position="97"/>
        <end position="117"/>
    </location>
</feature>
<feature type="transmembrane region" description="Helical" evidence="1">
    <location>
        <begin position="136"/>
        <end position="156"/>
    </location>
</feature>
<feature type="transmembrane region" description="Helical" evidence="1">
    <location>
        <begin position="178"/>
        <end position="198"/>
    </location>
</feature>
<feature type="transmembrane region" description="Helical" evidence="1">
    <location>
        <begin position="207"/>
        <end position="227"/>
    </location>
</feature>
<feature type="transmembrane region" description="Helical" evidence="1">
    <location>
        <begin position="242"/>
        <end position="262"/>
    </location>
</feature>
<name>Y2938_ALISL</name>
<proteinExistence type="inferred from homology"/>
<evidence type="ECO:0000255" key="1">
    <source>
        <dbReference type="HAMAP-Rule" id="MF_00672"/>
    </source>
</evidence>
<comment type="subcellular location">
    <subcellularLocation>
        <location evidence="1">Cell inner membrane</location>
        <topology evidence="1">Multi-pass membrane protein</topology>
    </subcellularLocation>
</comment>
<comment type="similarity">
    <text evidence="1">Belongs to the UPF0761 family.</text>
</comment>
<dbReference type="EMBL" id="FM178379">
    <property type="protein sequence ID" value="CAQ80622.1"/>
    <property type="molecule type" value="Genomic_DNA"/>
</dbReference>
<dbReference type="RefSeq" id="WP_012551352.1">
    <property type="nucleotide sequence ID" value="NC_011312.1"/>
</dbReference>
<dbReference type="KEGG" id="vsa:VSAL_I2938"/>
<dbReference type="eggNOG" id="COG1295">
    <property type="taxonomic scope" value="Bacteria"/>
</dbReference>
<dbReference type="HOGENOM" id="CLU_032288_0_0_6"/>
<dbReference type="Proteomes" id="UP000001730">
    <property type="component" value="Chromosome 1"/>
</dbReference>
<dbReference type="GO" id="GO:0005886">
    <property type="term" value="C:plasma membrane"/>
    <property type="evidence" value="ECO:0007669"/>
    <property type="project" value="UniProtKB-SubCell"/>
</dbReference>
<dbReference type="HAMAP" id="MF_00672">
    <property type="entry name" value="UPF0761"/>
    <property type="match status" value="1"/>
</dbReference>
<dbReference type="InterPro" id="IPR023679">
    <property type="entry name" value="UPF0761_bac"/>
</dbReference>
<dbReference type="InterPro" id="IPR017039">
    <property type="entry name" value="Virul_fac_BrkB"/>
</dbReference>
<dbReference type="NCBIfam" id="NF002457">
    <property type="entry name" value="PRK01637.1"/>
    <property type="match status" value="1"/>
</dbReference>
<dbReference type="NCBIfam" id="TIGR00765">
    <property type="entry name" value="yihY_not_rbn"/>
    <property type="match status" value="1"/>
</dbReference>
<dbReference type="PANTHER" id="PTHR30213">
    <property type="entry name" value="INNER MEMBRANE PROTEIN YHJD"/>
    <property type="match status" value="1"/>
</dbReference>
<dbReference type="PANTHER" id="PTHR30213:SF0">
    <property type="entry name" value="UPF0761 MEMBRANE PROTEIN YIHY"/>
    <property type="match status" value="1"/>
</dbReference>
<dbReference type="Pfam" id="PF03631">
    <property type="entry name" value="Virul_fac_BrkB"/>
    <property type="match status" value="1"/>
</dbReference>
<dbReference type="PIRSF" id="PIRSF035875">
    <property type="entry name" value="RNase_BN"/>
    <property type="match status" value="1"/>
</dbReference>
<gene>
    <name type="ordered locus">VSAL_I2938</name>
</gene>
<reference key="1">
    <citation type="journal article" date="2008" name="BMC Genomics">
        <title>The genome sequence of the fish pathogen Aliivibrio salmonicida strain LFI1238 shows extensive evidence of gene decay.</title>
        <authorList>
            <person name="Hjerde E."/>
            <person name="Lorentzen M.S."/>
            <person name="Holden M.T."/>
            <person name="Seeger K."/>
            <person name="Paulsen S."/>
            <person name="Bason N."/>
            <person name="Churcher C."/>
            <person name="Harris D."/>
            <person name="Norbertczak H."/>
            <person name="Quail M.A."/>
            <person name="Sanders S."/>
            <person name="Thurston S."/>
            <person name="Parkhill J."/>
            <person name="Willassen N.P."/>
            <person name="Thomson N.R."/>
        </authorList>
    </citation>
    <scope>NUCLEOTIDE SEQUENCE [LARGE SCALE GENOMIC DNA]</scope>
    <source>
        <strain>LFI1238</strain>
    </source>
</reference>
<protein>
    <recommendedName>
        <fullName evidence="1">UPF0761 membrane protein VSAL_I2938</fullName>
    </recommendedName>
</protein>
<organism>
    <name type="scientific">Aliivibrio salmonicida (strain LFI1238)</name>
    <name type="common">Vibrio salmonicida (strain LFI1238)</name>
    <dbReference type="NCBI Taxonomy" id="316275"/>
    <lineage>
        <taxon>Bacteria</taxon>
        <taxon>Pseudomonadati</taxon>
        <taxon>Pseudomonadota</taxon>
        <taxon>Gammaproteobacteria</taxon>
        <taxon>Vibrionales</taxon>
        <taxon>Vibrionaceae</taxon>
        <taxon>Aliivibrio</taxon>
    </lineage>
</organism>
<accession>B6EGQ7</accession>
<sequence>MEEKFKYSLRISWSYFLFLKQRIIHDRLTVSAGYMAYITLLSLVPLVTVLLSVLSQFPIFSGAGETVQEFVIQNFVPAASDAVEGSLKEFISNTGKMTAVGSGFLFVASVMLISAIDRSLNYIWRVKKKRRPMYSFSLYWMILTLGPLLVWASLAATSYVTSLNIMDDEIVSSFYRTLLGWLPIILSFSAFLGLYLLVPNKKIRVRHALVGAMSAGCLFEVSKVGFAQYITQFPSYEVIYGALAAVPILFVWIYLCWIIVLIGAEITASLGESDQWLIDKINTHVFDAENTVLTESKGLTESDSTDPKSK</sequence>